<keyword id="KW-0002">3D-structure</keyword>
<keyword id="KW-0025">Alternative splicing</keyword>
<keyword id="KW-1003">Cell membrane</keyword>
<keyword id="KW-1015">Disulfide bond</keyword>
<keyword id="KW-1183">Host cell receptor for virus entry</keyword>
<keyword id="KW-0391">Immunity</keyword>
<keyword id="KW-0393">Immunoglobulin domain</keyword>
<keyword id="KW-0446">Lipid-binding</keyword>
<keyword id="KW-0472">Membrane</keyword>
<keyword id="KW-0597">Phosphoprotein</keyword>
<keyword id="KW-0675">Receptor</keyword>
<keyword id="KW-1185">Reference proteome</keyword>
<keyword id="KW-0732">Signal</keyword>
<keyword id="KW-0812">Transmembrane</keyword>
<keyword id="KW-1133">Transmembrane helix</keyword>
<reference key="1">
    <citation type="journal article" date="2003" name="J. Immunol.">
        <title>CMRF-35-like molecule-1, a novel mouse myeloid receptor, can inhibit osteoclast formation.</title>
        <authorList>
            <person name="Chung D.-H."/>
            <person name="Humphrey M.B."/>
            <person name="Nakamura M.C."/>
            <person name="Ginzinger D.G."/>
            <person name="Seaman W.E."/>
            <person name="Daws M.R."/>
        </authorList>
    </citation>
    <scope>NUCLEOTIDE SEQUENCE [MRNA] (ISOFORM 1)</scope>
    <scope>FUNCTION</scope>
    <scope>TISSUE SPECIFICITY</scope>
    <scope>INTERACTION WITH PTPN6</scope>
    <source>
        <strain>C57BL/6J</strain>
    </source>
</reference>
<reference key="2">
    <citation type="journal article" date="2007" name="J. Biol. Chem.">
        <title>Functional analysis of activating receptor LMIR4 as a counterpart of inhibitory receptor LMIR3.</title>
        <authorList>
            <person name="Izawa K."/>
            <person name="Kitaura J."/>
            <person name="Yamanishi Y."/>
            <person name="Matsuoka T."/>
            <person name="Oki T."/>
            <person name="Shibata F."/>
            <person name="Kumagai H."/>
            <person name="Nakajima H."/>
            <person name="Maeda-Yamamoto M."/>
            <person name="Hauchins J.P."/>
            <person name="Tybulewicz V.L."/>
            <person name="Takai T."/>
            <person name="Kitamura T."/>
        </authorList>
    </citation>
    <scope>NUCLEOTIDE SEQUENCE [MRNA] (ISOFORM 1)</scope>
    <scope>FUNCTION</scope>
    <source>
        <strain>CBA/J</strain>
    </source>
</reference>
<reference key="3">
    <citation type="submission" date="2000-04" db="EMBL/GenBank/DDBJ databases">
        <authorList>
            <person name="Zhang W."/>
            <person name="Wan T."/>
            <person name="Li N."/>
            <person name="Chen T."/>
            <person name="Cao X."/>
        </authorList>
    </citation>
    <scope>NUCLEOTIDE SEQUENCE [MRNA] (ISOFORM 3)</scope>
</reference>
<reference key="4">
    <citation type="journal article" date="2009" name="PLoS Biol.">
        <title>Lineage-specific biology revealed by a finished genome assembly of the mouse.</title>
        <authorList>
            <person name="Church D.M."/>
            <person name="Goodstadt L."/>
            <person name="Hillier L.W."/>
            <person name="Zody M.C."/>
            <person name="Goldstein S."/>
            <person name="She X."/>
            <person name="Bult C.J."/>
            <person name="Agarwala R."/>
            <person name="Cherry J.L."/>
            <person name="DiCuccio M."/>
            <person name="Hlavina W."/>
            <person name="Kapustin Y."/>
            <person name="Meric P."/>
            <person name="Maglott D."/>
            <person name="Birtle Z."/>
            <person name="Marques A.C."/>
            <person name="Graves T."/>
            <person name="Zhou S."/>
            <person name="Teague B."/>
            <person name="Potamousis K."/>
            <person name="Churas C."/>
            <person name="Place M."/>
            <person name="Herschleb J."/>
            <person name="Runnheim R."/>
            <person name="Forrest D."/>
            <person name="Amos-Landgraf J."/>
            <person name="Schwartz D.C."/>
            <person name="Cheng Z."/>
            <person name="Lindblad-Toh K."/>
            <person name="Eichler E.E."/>
            <person name="Ponting C.P."/>
        </authorList>
    </citation>
    <scope>NUCLEOTIDE SEQUENCE [LARGE SCALE GENOMIC DNA]</scope>
    <source>
        <strain>C57BL/6J</strain>
    </source>
</reference>
<reference key="5">
    <citation type="journal article" date="2004" name="Genome Res.">
        <title>The status, quality, and expansion of the NIH full-length cDNA project: the Mammalian Gene Collection (MGC).</title>
        <authorList>
            <consortium name="The MGC Project Team"/>
        </authorList>
    </citation>
    <scope>NUCLEOTIDE SEQUENCE [LARGE SCALE MRNA] (ISOFORM 2)</scope>
    <source>
        <strain>129</strain>
        <tissue>Mammary gland</tissue>
    </source>
</reference>
<reference key="6">
    <citation type="journal article" date="2008" name="J. Immunol.">
        <title>Caspase-independent cell death by CD300LF (MAIR-V), an inhibitory immunoglobulin-like receptor on myeloid cells.</title>
        <authorList>
            <person name="Can I."/>
            <person name="Tahara-Hanaoka S."/>
            <person name="Hitomi K."/>
            <person name="Nakano T."/>
            <person name="Nakahashi-Oda C."/>
            <person name="Kurita N."/>
            <person name="Honda S."/>
            <person name="Shibuya K."/>
            <person name="Shibuya A."/>
        </authorList>
    </citation>
    <scope>FUNCTION</scope>
    <scope>TISSUE SPECIFICITY</scope>
</reference>
<reference key="7">
    <citation type="journal article" date="2011" name="J. Immunol.">
        <title>Cutting edge: mouse CD300f (CMRF-35-like molecule-1) recognizes outer membrane-exposed phosphatidylserine and can promote phagocytosis.</title>
        <authorList>
            <person name="Choi S.C."/>
            <person name="Simhadri V.R."/>
            <person name="Tian L."/>
            <person name="Gil-Krzewska A."/>
            <person name="Krzewski K."/>
            <person name="Borrego F."/>
            <person name="Coligan J.E."/>
        </authorList>
    </citation>
    <scope>FUNCTION</scope>
    <scope>PHOSPHATIDYLSERINE-BINDING</scope>
</reference>
<reference key="8">
    <citation type="journal article" date="2012" name="Immunity">
        <title>The receptor LMIR3 negatively regulates mast cell activation and allergic responses by binding to extracellular ceramide.</title>
        <authorList>
            <person name="Izawa K."/>
            <person name="Yamanishi Y."/>
            <person name="Maehara A."/>
            <person name="Takahashi M."/>
            <person name="Isobe M."/>
            <person name="Ito S."/>
            <person name="Kaitani A."/>
            <person name="Matsukawa T."/>
            <person name="Matsuoka T."/>
            <person name="Nakahara F."/>
            <person name="Oki T."/>
            <person name="Kiyonari H."/>
            <person name="Abe T."/>
            <person name="Okumura K."/>
            <person name="Kitamura T."/>
            <person name="Kitaura J."/>
        </authorList>
    </citation>
    <scope>FUNCTION</scope>
    <scope>CERAMIDE-BINDING</scope>
    <scope>PHOSPHORYLATION</scope>
</reference>
<reference key="9">
    <citation type="journal article" date="2015" name="Proc. Natl. Acad. Sci. U.S.A.">
        <title>CD300f associates with IL-4 receptor alpha and amplifies IL-4-induced immune cell responses.</title>
        <authorList>
            <person name="Moshkovits I."/>
            <person name="Karo-Atar D."/>
            <person name="Itan M."/>
            <person name="Reichman H."/>
            <person name="Rozenberg P."/>
            <person name="Morgenstern-Ben-Baruch N."/>
            <person name="Shik D."/>
            <person name="Ejarque-Ortiz A."/>
            <person name="Hershko A.Y."/>
            <person name="Tian L."/>
            <person name="Coligan J.E."/>
            <person name="Sayos J."/>
            <person name="Munitz A."/>
        </authorList>
    </citation>
    <scope>FUNCTION</scope>
    <scope>INDUCTION</scope>
    <scope>TISSUE SPECIFICITY</scope>
    <scope>INTERACTION WITH IL4R</scope>
</reference>
<reference key="10">
    <citation type="journal article" date="2016" name="Cell Death Differ.">
        <title>Enhanced efferocytosis by dendritic cells underlies memory T-cell expansion and susceptibility to autoimmune disease in CD300f-deficient mice.</title>
        <authorList>
            <person name="Tian L."/>
            <person name="Choi S.C."/>
            <person name="Lee H.N."/>
            <person name="Murakami Y."/>
            <person name="Qi C.F."/>
            <person name="Sengottuvelu M."/>
            <person name="Voss O."/>
            <person name="Krzewski K."/>
            <person name="Coligan J.E."/>
        </authorList>
    </citation>
    <scope>FUNCTION</scope>
    <scope>TISSUE SPECIFICITY</scope>
</reference>
<reference key="11">
    <citation type="journal article" date="2016" name="Proc. Natl. Acad. Sci. U.S.A.">
        <title>Functional receptor molecules CD300lf and CD300ld within the CD300 family enable murine noroviruses to infect cells.</title>
        <authorList>
            <person name="Haga K."/>
            <person name="Fujimoto A."/>
            <person name="Takai-Todaka R."/>
            <person name="Miki M."/>
            <person name="Doan Y.H."/>
            <person name="Murakami K."/>
            <person name="Yokoyama M."/>
            <person name="Murata K."/>
            <person name="Nakanishi A."/>
            <person name="Katayama K."/>
        </authorList>
    </citation>
    <scope>FUNCTION (MICROBIAL INFECTION)</scope>
    <scope>MNV-BINDING REGION</scope>
</reference>
<reference key="12">
    <citation type="journal article" date="2018" name="Proc. Natl. Acad. Sci. U.S.A.">
        <title>Structural basis for murine norovirus engagement of bile acids and the CD300lf receptor.</title>
        <authorList>
            <person name="Nelson C."/>
            <person name="Wilen C."/>
            <person name="Dai Y.N."/>
            <person name="Orchard R."/>
            <person name="Kim A."/>
            <person name="Stegeman R."/>
            <person name="Hsieh L."/>
            <person name="Smith T."/>
            <person name="Virgin H."/>
            <person name="Fremont D."/>
        </authorList>
    </citation>
    <scope>FUNCTION (MICROBIAL INFECTION)</scope>
</reference>
<reference key="13">
    <citation type="submission" date="2005-05" db="PDB data bank">
        <title>Crystal structure of the mouse CLM-1 ectodomain.</title>
        <authorList>
            <consortium name="Midwest center for structural genomics (MCSG)"/>
        </authorList>
    </citation>
    <scope>X-RAY CRYSTALLOGRAPHY (2.1 ANGSTROMS) OF 20-138 (ISOFORM 2)</scope>
    <scope>DISULFIDE BONDS</scope>
</reference>
<reference key="14">
    <citation type="journal article" date="2016" name="Science">
        <title>Discovery of a proteinaceous cellular receptor for a norovirus.</title>
        <authorList>
            <person name="Orchard R.C."/>
            <person name="Wilen C.B."/>
            <person name="Doench J.G."/>
            <person name="Baldridge M.T."/>
            <person name="McCune B.T."/>
            <person name="Lee Y.C."/>
            <person name="Lee S."/>
            <person name="Pruett-Miller S.M."/>
            <person name="Nelson C.A."/>
            <person name="Fremont D.H."/>
            <person name="Virgin H.W."/>
        </authorList>
    </citation>
    <scope>X-RAY CRYSTALLOGRAPHY (1.6 ANGSTROMS) OF 20-138 (ISOFORM 2)</scope>
    <scope>FUNCTION (MICROBIAL INFECTION)</scope>
    <scope>DISULFIDE BONDS</scope>
</reference>
<name>CLM1_MOUSE</name>
<proteinExistence type="evidence at protein level"/>
<organism>
    <name type="scientific">Mus musculus</name>
    <name type="common">Mouse</name>
    <dbReference type="NCBI Taxonomy" id="10090"/>
    <lineage>
        <taxon>Eukaryota</taxon>
        <taxon>Metazoa</taxon>
        <taxon>Chordata</taxon>
        <taxon>Craniata</taxon>
        <taxon>Vertebrata</taxon>
        <taxon>Euteleostomi</taxon>
        <taxon>Mammalia</taxon>
        <taxon>Eutheria</taxon>
        <taxon>Euarchontoglires</taxon>
        <taxon>Glires</taxon>
        <taxon>Rodentia</taxon>
        <taxon>Myomorpha</taxon>
        <taxon>Muroidea</taxon>
        <taxon>Muridae</taxon>
        <taxon>Murinae</taxon>
        <taxon>Mus</taxon>
        <taxon>Mus</taxon>
    </lineage>
</organism>
<accession>Q6SJQ7</accession>
<accession>A2A6Z1</accession>
<accession>A2A6Z3</accession>
<accession>Q6PEU7</accession>
<accession>Q8K4V9</accession>
<sequence>MHLSLLVPFLFWITGCCTAEDPVTGPEEVSGQEQGSLTVQCRYTSGWKDYKKYWCQGVPQRSCKTLVETDASEQLVKKNRVSIRDNQRDFIFTVTMEDLRMSDAGIYWCGITKGGLDPMFKVTVNIGPAIQVPITVPTMPPITSTTTIFTVTTTVKETSMFPTLTSYYSDNGHGGGDSGGGEDGVGDGFLDLSVLLPVISAVLLLLLLVASLFAWRMVRRQKKAAGPPSEQAQSLEGDLCYADLSLKQPRTSPGSSWKKGSSMSSSGKDHQEEVEYVTMAPFPREEVSYAALTLAGLGQEPTYGNTGCPITHVPRTGLEEETTEYSSIRRPLPAAMP</sequence>
<evidence type="ECO:0000250" key="1"/>
<evidence type="ECO:0000250" key="2">
    <source>
        <dbReference type="UniProtKB" id="Q8TDQ1"/>
    </source>
</evidence>
<evidence type="ECO:0000255" key="3"/>
<evidence type="ECO:0000256" key="4">
    <source>
        <dbReference type="SAM" id="MobiDB-lite"/>
    </source>
</evidence>
<evidence type="ECO:0000269" key="5">
    <source>
    </source>
</evidence>
<evidence type="ECO:0000269" key="6">
    <source>
    </source>
</evidence>
<evidence type="ECO:0000269" key="7">
    <source>
    </source>
</evidence>
<evidence type="ECO:0000269" key="8">
    <source>
    </source>
</evidence>
<evidence type="ECO:0000269" key="9">
    <source>
    </source>
</evidence>
<evidence type="ECO:0000269" key="10">
    <source>
    </source>
</evidence>
<evidence type="ECO:0000269" key="11">
    <source>
    </source>
</evidence>
<evidence type="ECO:0000269" key="12">
    <source>
    </source>
</evidence>
<evidence type="ECO:0000269" key="13">
    <source>
    </source>
</evidence>
<evidence type="ECO:0000269" key="14">
    <source>
    </source>
</evidence>
<evidence type="ECO:0000269" key="15">
    <source ref="13"/>
</evidence>
<evidence type="ECO:0000303" key="16">
    <source>
    </source>
</evidence>
<evidence type="ECO:0000303" key="17">
    <source ref="3"/>
</evidence>
<evidence type="ECO:0000305" key="18"/>
<evidence type="ECO:0007829" key="19">
    <source>
        <dbReference type="PDB" id="6C74"/>
    </source>
</evidence>
<feature type="signal peptide" evidence="3">
    <location>
        <begin position="1"/>
        <end position="19"/>
    </location>
</feature>
<feature type="chain" id="PRO_0000247826" description="CMRF35-like molecule 1">
    <location>
        <begin position="20"/>
        <end position="337"/>
    </location>
</feature>
<feature type="topological domain" description="Extracellular" evidence="3">
    <location>
        <begin position="20"/>
        <end position="193"/>
    </location>
</feature>
<feature type="transmembrane region" description="Helical" evidence="3">
    <location>
        <begin position="194"/>
        <end position="214"/>
    </location>
</feature>
<feature type="topological domain" description="Cytoplasmic" evidence="3">
    <location>
        <begin position="215"/>
        <end position="337"/>
    </location>
</feature>
<feature type="domain" description="Ig-like V-type">
    <location>
        <begin position="20"/>
        <end position="125"/>
    </location>
</feature>
<feature type="region of interest" description="Plays an important role in murine norovirus (MNV) binding" evidence="13">
    <location>
        <begin position="39"/>
        <end position="45"/>
    </location>
</feature>
<feature type="region of interest" description="Disordered" evidence="4">
    <location>
        <begin position="248"/>
        <end position="270"/>
    </location>
</feature>
<feature type="region of interest" description="Disordered" evidence="4">
    <location>
        <begin position="318"/>
        <end position="337"/>
    </location>
</feature>
<feature type="compositionally biased region" description="Low complexity" evidence="4">
    <location>
        <begin position="252"/>
        <end position="266"/>
    </location>
</feature>
<feature type="site" description="Phosphatase-binding" evidence="1">
    <location>
        <position position="241"/>
    </location>
</feature>
<feature type="disulfide bond" evidence="12 15">
    <location>
        <begin position="41"/>
        <end position="109"/>
    </location>
</feature>
<feature type="disulfide bond" evidence="12 15">
    <location>
        <begin position="55"/>
        <end position="63"/>
    </location>
</feature>
<feature type="splice variant" id="VSP_020066" description="In isoform 2." evidence="16">
    <location>
        <begin position="129"/>
        <end position="135"/>
    </location>
</feature>
<feature type="splice variant" id="VSP_020067" description="In isoform 3." evidence="17">
    <location>
        <begin position="212"/>
        <end position="265"/>
    </location>
</feature>
<feature type="sequence conflict" description="In Ref. 2; AB292061." evidence="18" ref="2">
    <original>E</original>
    <variation>Q</variation>
    <location>
        <position position="20"/>
    </location>
</feature>
<feature type="sequence conflict" description="In Ref. 3; AAM19096." evidence="18" ref="3">
    <original>L</original>
    <variation>V</variation>
    <location>
        <position position="37"/>
    </location>
</feature>
<feature type="sequence conflict" description="In Ref. 2; AB292061." evidence="18" ref="2">
    <original>QGVPQRSCKT</original>
    <variation>RGAYWKSCEI</variation>
    <location>
        <begin position="56"/>
        <end position="65"/>
    </location>
</feature>
<feature type="sequence conflict" description="In Ref. 2; AB292061." evidence="18" ref="2">
    <original>A</original>
    <variation>K</variation>
    <location>
        <position position="71"/>
    </location>
</feature>
<feature type="sequence conflict" description="In Ref. 2; AB292061." evidence="18" ref="2">
    <original>GGL</original>
    <variation>AGP</variation>
    <location>
        <begin position="114"/>
        <end position="116"/>
    </location>
</feature>
<feature type="sequence conflict" description="In Ref. 2; AB292061." evidence="18" ref="2">
    <original>T</original>
    <variation>A</variation>
    <location>
        <position position="123"/>
    </location>
</feature>
<feature type="sequence conflict" description="In Ref. 2; AB292061." evidence="18" ref="2">
    <original>S</original>
    <variation>G</variation>
    <location>
        <position position="166"/>
    </location>
</feature>
<feature type="sequence conflict" description="In Ref. 2; AB292061." evidence="18" ref="2">
    <original>P</original>
    <variation>H</variation>
    <location>
        <position position="337"/>
    </location>
</feature>
<feature type="strand" evidence="19">
    <location>
        <begin position="22"/>
        <end position="24"/>
    </location>
</feature>
<feature type="strand" evidence="19">
    <location>
        <begin position="27"/>
        <end position="32"/>
    </location>
</feature>
<feature type="strand" evidence="19">
    <location>
        <begin position="37"/>
        <end position="43"/>
    </location>
</feature>
<feature type="helix" evidence="19">
    <location>
        <begin position="45"/>
        <end position="47"/>
    </location>
</feature>
<feature type="strand" evidence="19">
    <location>
        <begin position="52"/>
        <end position="59"/>
    </location>
</feature>
<feature type="helix" evidence="19">
    <location>
        <begin position="60"/>
        <end position="62"/>
    </location>
</feature>
<feature type="strand" evidence="19">
    <location>
        <begin position="64"/>
        <end position="68"/>
    </location>
</feature>
<feature type="strand" evidence="19">
    <location>
        <begin position="71"/>
        <end position="73"/>
    </location>
</feature>
<feature type="strand" evidence="19">
    <location>
        <begin position="76"/>
        <end position="78"/>
    </location>
</feature>
<feature type="strand" evidence="19">
    <location>
        <begin position="81"/>
        <end position="86"/>
    </location>
</feature>
<feature type="turn" evidence="19">
    <location>
        <begin position="87"/>
        <end position="90"/>
    </location>
</feature>
<feature type="strand" evidence="19">
    <location>
        <begin position="91"/>
        <end position="96"/>
    </location>
</feature>
<feature type="helix" evidence="19">
    <location>
        <begin position="101"/>
        <end position="103"/>
    </location>
</feature>
<feature type="strand" evidence="19">
    <location>
        <begin position="105"/>
        <end position="111"/>
    </location>
</feature>
<feature type="strand" evidence="19">
    <location>
        <begin position="114"/>
        <end position="116"/>
    </location>
</feature>
<feature type="strand" evidence="19">
    <location>
        <begin position="119"/>
        <end position="127"/>
    </location>
</feature>
<dbReference type="EMBL" id="AY457047">
    <property type="protein sequence ID" value="AAR27938.1"/>
    <property type="molecule type" value="mRNA"/>
</dbReference>
<dbReference type="EMBL" id="AB292061">
    <property type="status" value="NOT_ANNOTATED_CDS"/>
    <property type="molecule type" value="mRNA"/>
</dbReference>
<dbReference type="EMBL" id="AF251703">
    <property type="protein sequence ID" value="AAM19096.1"/>
    <property type="molecule type" value="mRNA"/>
</dbReference>
<dbReference type="EMBL" id="AL606487">
    <property type="status" value="NOT_ANNOTATED_CDS"/>
    <property type="molecule type" value="Genomic_DNA"/>
</dbReference>
<dbReference type="EMBL" id="BC057864">
    <property type="protein sequence ID" value="AAH57864.1"/>
    <property type="molecule type" value="mRNA"/>
</dbReference>
<dbReference type="CCDS" id="CCDS25619.1">
    <molecule id="Q6SJQ7-2"/>
</dbReference>
<dbReference type="CCDS" id="CCDS48980.1">
    <molecule id="Q6SJQ7-1"/>
</dbReference>
<dbReference type="RefSeq" id="NP_001162624.1">
    <molecule id="Q6SJQ7-1"/>
    <property type="nucleotide sequence ID" value="NM_001169153.1"/>
</dbReference>
<dbReference type="RefSeq" id="NP_663609.2">
    <molecule id="Q6SJQ7-2"/>
    <property type="nucleotide sequence ID" value="NM_145634.3"/>
</dbReference>
<dbReference type="RefSeq" id="XP_017170042.1">
    <property type="nucleotide sequence ID" value="XM_017314553.1"/>
</dbReference>
<dbReference type="PDB" id="1ZOX">
    <property type="method" value="X-ray"/>
    <property type="resolution" value="2.10 A"/>
    <property type="chains" value="A=20-128"/>
</dbReference>
<dbReference type="PDB" id="5FFL">
    <property type="method" value="X-ray"/>
    <property type="resolution" value="1.60 A"/>
    <property type="chains" value="A=20-128"/>
</dbReference>
<dbReference type="PDB" id="5OR7">
    <property type="method" value="X-ray"/>
    <property type="resolution" value="2.05 A"/>
    <property type="chains" value="C=1-337"/>
</dbReference>
<dbReference type="PDB" id="6C6Q">
    <property type="method" value="X-ray"/>
    <property type="resolution" value="2.00 A"/>
    <property type="chains" value="D/F=20-128"/>
</dbReference>
<dbReference type="PDB" id="6C74">
    <property type="method" value="X-ray"/>
    <property type="resolution" value="1.36 A"/>
    <property type="chains" value="A=20-128"/>
</dbReference>
<dbReference type="PDB" id="6E47">
    <property type="method" value="X-ray"/>
    <property type="resolution" value="1.95 A"/>
    <property type="chains" value="F/G=20-128"/>
</dbReference>
<dbReference type="PDB" id="6E48">
    <property type="method" value="X-ray"/>
    <property type="resolution" value="1.80 A"/>
    <property type="chains" value="F/G=20-128"/>
</dbReference>
<dbReference type="PDB" id="6H6L">
    <property type="method" value="X-ray"/>
    <property type="resolution" value="2.50 A"/>
    <property type="chains" value="E/F/G/H=20-128"/>
</dbReference>
<dbReference type="PDB" id="6H6M">
    <property type="method" value="X-ray"/>
    <property type="resolution" value="2.38 A"/>
    <property type="chains" value="E/F=20-128"/>
</dbReference>
<dbReference type="PDBsum" id="1ZOX"/>
<dbReference type="PDBsum" id="5FFL"/>
<dbReference type="PDBsum" id="5OR7"/>
<dbReference type="PDBsum" id="6C6Q"/>
<dbReference type="PDBsum" id="6C74"/>
<dbReference type="PDBsum" id="6E47"/>
<dbReference type="PDBsum" id="6E48"/>
<dbReference type="PDBsum" id="6H6L"/>
<dbReference type="PDBsum" id="6H6M"/>
<dbReference type="SMR" id="Q6SJQ7"/>
<dbReference type="BioGRID" id="232945">
    <property type="interactions" value="1"/>
</dbReference>
<dbReference type="FunCoup" id="Q6SJQ7">
    <property type="interactions" value="907"/>
</dbReference>
<dbReference type="IntAct" id="Q6SJQ7">
    <property type="interactions" value="1"/>
</dbReference>
<dbReference type="STRING" id="10090.ENSMUSP00000102171"/>
<dbReference type="iPTMnet" id="Q6SJQ7"/>
<dbReference type="PhosphoSitePlus" id="Q6SJQ7"/>
<dbReference type="PaxDb" id="10090-ENSMUSP00000102171"/>
<dbReference type="ProteomicsDB" id="281688">
    <molecule id="Q6SJQ7-1"/>
</dbReference>
<dbReference type="ProteomicsDB" id="281689">
    <molecule id="Q6SJQ7-2"/>
</dbReference>
<dbReference type="ProteomicsDB" id="281690">
    <molecule id="Q6SJQ7-3"/>
</dbReference>
<dbReference type="ABCD" id="Q6SJQ7">
    <property type="antibodies" value="1 sequenced antibody"/>
</dbReference>
<dbReference type="DNASU" id="246746"/>
<dbReference type="Ensembl" id="ENSMUST00000051264.14">
    <molecule id="Q6SJQ7-2"/>
    <property type="protein sequence ID" value="ENSMUSP00000053983.8"/>
    <property type="gene ID" value="ENSMUSG00000047798.16"/>
</dbReference>
<dbReference type="Ensembl" id="ENSMUST00000106561.8">
    <molecule id="Q6SJQ7-1"/>
    <property type="protein sequence ID" value="ENSMUSP00000102171.2"/>
    <property type="gene ID" value="ENSMUSG00000047798.16"/>
</dbReference>
<dbReference type="GeneID" id="246746"/>
<dbReference type="KEGG" id="mmu:246746"/>
<dbReference type="UCSC" id="uc007mgn.2">
    <molecule id="Q6SJQ7-1"/>
    <property type="organism name" value="mouse"/>
</dbReference>
<dbReference type="UCSC" id="uc011yhh.1">
    <molecule id="Q6SJQ7-2"/>
    <property type="organism name" value="mouse"/>
</dbReference>
<dbReference type="AGR" id="MGI:2442359"/>
<dbReference type="CTD" id="146722"/>
<dbReference type="MGI" id="MGI:2442359">
    <property type="gene designation" value="Cd300lf"/>
</dbReference>
<dbReference type="VEuPathDB" id="HostDB:ENSMUSG00000047798"/>
<dbReference type="eggNOG" id="ENOG502S7MA">
    <property type="taxonomic scope" value="Eukaryota"/>
</dbReference>
<dbReference type="GeneTree" id="ENSGT00940000154332"/>
<dbReference type="InParanoid" id="Q6SJQ7"/>
<dbReference type="OMA" id="RSHEEPT"/>
<dbReference type="OrthoDB" id="91496at9989"/>
<dbReference type="PhylomeDB" id="Q6SJQ7"/>
<dbReference type="TreeFam" id="TF334441"/>
<dbReference type="BioGRID-ORCS" id="246746">
    <property type="hits" value="5 hits in 78 CRISPR screens"/>
</dbReference>
<dbReference type="ChiTaRS" id="Cd300lf">
    <property type="organism name" value="mouse"/>
</dbReference>
<dbReference type="EvolutionaryTrace" id="Q6SJQ7"/>
<dbReference type="PRO" id="PR:Q6SJQ7"/>
<dbReference type="Proteomes" id="UP000000589">
    <property type="component" value="Chromosome 11"/>
</dbReference>
<dbReference type="RNAct" id="Q6SJQ7">
    <property type="molecule type" value="protein"/>
</dbReference>
<dbReference type="Bgee" id="ENSMUSG00000047798">
    <property type="expression patterns" value="Expressed in granulocyte and 117 other cell types or tissues"/>
</dbReference>
<dbReference type="ExpressionAtlas" id="Q6SJQ7">
    <property type="expression patterns" value="baseline and differential"/>
</dbReference>
<dbReference type="GO" id="GO:0005886">
    <property type="term" value="C:plasma membrane"/>
    <property type="evidence" value="ECO:0007669"/>
    <property type="project" value="UniProtKB-SubCell"/>
</dbReference>
<dbReference type="GO" id="GO:0097001">
    <property type="term" value="F:ceramide binding"/>
    <property type="evidence" value="ECO:0000314"/>
    <property type="project" value="UniProtKB"/>
</dbReference>
<dbReference type="GO" id="GO:0005136">
    <property type="term" value="F:interleukin-4 receptor binding"/>
    <property type="evidence" value="ECO:0000314"/>
    <property type="project" value="UniProtKB"/>
</dbReference>
<dbReference type="GO" id="GO:0001786">
    <property type="term" value="F:phosphatidylserine binding"/>
    <property type="evidence" value="ECO:0000314"/>
    <property type="project" value="UniProtKB"/>
</dbReference>
<dbReference type="GO" id="GO:0001618">
    <property type="term" value="F:virus receptor activity"/>
    <property type="evidence" value="ECO:0000315"/>
    <property type="project" value="UniProtKB"/>
</dbReference>
<dbReference type="GO" id="GO:0035772">
    <property type="term" value="P:interleukin-13-mediated signaling pathway"/>
    <property type="evidence" value="ECO:0000315"/>
    <property type="project" value="UniProtKB"/>
</dbReference>
<dbReference type="GO" id="GO:2000426">
    <property type="term" value="P:negative regulation of apoptotic cell clearance"/>
    <property type="evidence" value="ECO:0000315"/>
    <property type="project" value="UniProtKB"/>
</dbReference>
<dbReference type="GO" id="GO:0033004">
    <property type="term" value="P:negative regulation of mast cell activation"/>
    <property type="evidence" value="ECO:0000315"/>
    <property type="project" value="UniProtKB"/>
</dbReference>
<dbReference type="GO" id="GO:0034125">
    <property type="term" value="P:negative regulation of MyD88-dependent toll-like receptor signaling pathway"/>
    <property type="evidence" value="ECO:0000250"/>
    <property type="project" value="UniProtKB"/>
</dbReference>
<dbReference type="GO" id="GO:0030316">
    <property type="term" value="P:osteoclast differentiation"/>
    <property type="evidence" value="ECO:0000314"/>
    <property type="project" value="MGI"/>
</dbReference>
<dbReference type="GO" id="GO:2000427">
    <property type="term" value="P:positive regulation of apoptotic cell clearance"/>
    <property type="evidence" value="ECO:0000314"/>
    <property type="project" value="UniProtKB"/>
</dbReference>
<dbReference type="GO" id="GO:1902216">
    <property type="term" value="P:positive regulation of interleukin-4-mediated signaling pathway"/>
    <property type="evidence" value="ECO:0000315"/>
    <property type="project" value="UniProtKB"/>
</dbReference>
<dbReference type="GO" id="GO:0035666">
    <property type="term" value="P:TRIF-dependent toll-like receptor signaling pathway"/>
    <property type="evidence" value="ECO:0000250"/>
    <property type="project" value="UniProtKB"/>
</dbReference>
<dbReference type="CDD" id="cd05716">
    <property type="entry name" value="IgV_pIgR_like"/>
    <property type="match status" value="1"/>
</dbReference>
<dbReference type="DisProt" id="DP02478"/>
<dbReference type="FunFam" id="2.60.40.10:FF:000370">
    <property type="entry name" value="CMRF35-like molecule 1"/>
    <property type="match status" value="1"/>
</dbReference>
<dbReference type="Gene3D" id="2.60.40.10">
    <property type="entry name" value="Immunoglobulins"/>
    <property type="match status" value="1"/>
</dbReference>
<dbReference type="InterPro" id="IPR050671">
    <property type="entry name" value="CD300_family_receptors"/>
</dbReference>
<dbReference type="InterPro" id="IPR036179">
    <property type="entry name" value="Ig-like_dom_sf"/>
</dbReference>
<dbReference type="InterPro" id="IPR013783">
    <property type="entry name" value="Ig-like_fold"/>
</dbReference>
<dbReference type="InterPro" id="IPR003599">
    <property type="entry name" value="Ig_sub"/>
</dbReference>
<dbReference type="InterPro" id="IPR013106">
    <property type="entry name" value="Ig_V-set"/>
</dbReference>
<dbReference type="PANTHER" id="PTHR11860:SF101">
    <property type="entry name" value="CMRF35-LIKE MOLECULE 1"/>
    <property type="match status" value="1"/>
</dbReference>
<dbReference type="PANTHER" id="PTHR11860">
    <property type="entry name" value="POLYMERIC-IMMUNOGLOBULIN RECEPTOR"/>
    <property type="match status" value="1"/>
</dbReference>
<dbReference type="Pfam" id="PF15330">
    <property type="entry name" value="SIT"/>
    <property type="match status" value="1"/>
</dbReference>
<dbReference type="Pfam" id="PF07686">
    <property type="entry name" value="V-set"/>
    <property type="match status" value="1"/>
</dbReference>
<dbReference type="SMART" id="SM00409">
    <property type="entry name" value="IG"/>
    <property type="match status" value="1"/>
</dbReference>
<dbReference type="SUPFAM" id="SSF48726">
    <property type="entry name" value="Immunoglobulin"/>
    <property type="match status" value="1"/>
</dbReference>
<gene>
    <name type="primary">Cd300lf</name>
    <name type="synonym">Clm1</name>
    <name type="synonym">Lmir3</name>
</gene>
<protein>
    <recommendedName>
        <fullName>CMRF35-like molecule 1</fullName>
        <shortName>CLM-1</shortName>
    </recommendedName>
    <alternativeName>
        <fullName>CD300 antigen-like family member F</fullName>
    </alternativeName>
    <alternativeName>
        <fullName>Leukocyte mono-Ig-like receptor 3</fullName>
    </alternativeName>
    <alternativeName>
        <fullName>Myeloid-associated immunoglobulin-like receptor 5</fullName>
        <shortName>MAIR-5</shortName>
        <shortName>MAIR-V</shortName>
    </alternativeName>
    <cdAntigenName>CD300f</cdAntigenName>
</protein>
<comment type="function">
    <text evidence="2 5 6 7 8 9 10 11">Acts as an inhibitory receptor for myeloid cells and mast cells (PubMed:17438331). Positively regulates the phagocytosis of apoptotic cells (efferocytosis) via phosphatidylserine (PS) recognition; recognizes and binds PS as a ligand which is expressed on the surface of apoptotic cells (PubMed:21865548). Plays an important role in the maintenance of immune homeostasis, by promoting macrophage-mediated efferocytosis and by inhibiting dendritic cell-mediated efferocytosis (PubMed:26768664). Negatively regulates Fc epsilon receptor-dependent mast cell activation and allergic responses via binding to ceramide which acts as a ligand (PubMed:23123064). May act as a coreceptor for interleukin 4 (IL-4). Associates with and regulates IL-4 receptor alpha-mediated responses by augmenting IL-4- and IL-13-induced signaling (PubMed:26124135). Negatively regulates the Toll-like receptor (TLR) signaling mediated by MYD88 and TRIF through activation of PTPN6/SHP-1 and PTPN11/SHP-2 (By similarity). Inhibits osteoclast formation (PubMed:14662855). Induces macrophage cell death upon engagement (PubMed:18097021).</text>
</comment>
<comment type="function">
    <text evidence="12 13 14">(Microbial infection) Acts as a functional receptor for murine norovirus (MNV). Mediates binding to the cell surface and is both necessary and sufficient for viral entry and replication (PubMed:27540007, PubMed:27681626, PubMed:30194229). This interaction requires Mg(2+) and Ca(2+) and is enhanced by bile acids (PubMed:30194229). Primary determinant of MNV species tropism and is sufficient to render cells permissive to infection by MNV. Can render nonmurine mammalian cells susceptible to MNV infection (PubMed:27540007, PubMed:27681626).</text>
</comment>
<comment type="subunit">
    <text evidence="5 10">Interacts with PTPN6/SHP-1 in a tyrosine phosphorylation dependent manner (PubMed:14662855). Interacts with IL4R (PubMed:26124135).</text>
</comment>
<comment type="subcellular location">
    <subcellularLocation>
        <location evidence="18">Cell membrane</location>
        <topology evidence="18">Single-pass type I membrane protein</topology>
    </subcellularLocation>
</comment>
<comment type="alternative products">
    <event type="alternative splicing"/>
    <isoform>
        <id>Q6SJQ7-1</id>
        <name>1</name>
        <sequence type="displayed"/>
    </isoform>
    <isoform>
        <id>Q6SJQ7-2</id>
        <name>2</name>
        <sequence type="described" ref="VSP_020066"/>
    </isoform>
    <isoform>
        <id>Q6SJQ7-3</id>
        <name>3</name>
        <sequence type="described" ref="VSP_020067"/>
    </isoform>
</comment>
<comment type="tissue specificity">
    <text evidence="5 7 10 11">Expressed in myeloid cells. Present on the surface of macrophages (at protein level). Highly expressed by alveolar, splenic macrophages and bone marrow-derived dendritic cells. Expression is increased following aeroallergen challenge in macrophages, mast cells, and eosinophils.</text>
</comment>
<comment type="induction">
    <text evidence="10">Up-regulated by interleukin-4/IL-4.</text>
</comment>
<comment type="PTM">
    <text evidence="9">Phosphorylated on tyrosine.</text>
</comment>
<comment type="similarity">
    <text evidence="18">Belongs to the CD300 family.</text>
</comment>